<protein>
    <recommendedName>
        <fullName evidence="1">Eukaryotic translation initiation factor 3 subunit A</fullName>
        <shortName evidence="1">eIF3a</shortName>
    </recommendedName>
    <alternativeName>
        <fullName evidence="1">Egg-laying defective protein 45</fullName>
    </alternativeName>
    <alternativeName>
        <fullName evidence="1">Eukaryotic translation initiation factor 3 subunit 10</fullName>
    </alternativeName>
</protein>
<comment type="function">
    <text evidence="1">RNA-binding component of the eukaryotic translation initiation factor 3 (eIF-3) complex, which is involved in protein synthesis of a specialized repertoire of mRNAs and, together with other initiation factors, stimulates binding of mRNA and methionyl-tRNAi to the 40S ribosome. The eIF-3 complex specifically targets and initiates translation of a subset of mRNAs involved in cell proliferation.</text>
</comment>
<comment type="subunit">
    <text evidence="1">Component of the eukaryotic translation initiation factor 3 (eIF-3) complex.</text>
</comment>
<comment type="subcellular location">
    <subcellularLocation>
        <location evidence="1">Cytoplasm</location>
    </subcellularLocation>
</comment>
<comment type="similarity">
    <text evidence="1">Belongs to the eIF-3 subunit A family.</text>
</comment>
<dbReference type="EMBL" id="HE601477">
    <property type="protein sequence ID" value="CAP21561.1"/>
    <property type="molecule type" value="Genomic_DNA"/>
</dbReference>
<dbReference type="SMR" id="A8WM57"/>
<dbReference type="FunCoup" id="A8WM57">
    <property type="interactions" value="3110"/>
</dbReference>
<dbReference type="STRING" id="6238.A8WM57"/>
<dbReference type="EnsemblMetazoa" id="CBG00021.1">
    <property type="protein sequence ID" value="CBG00021.1"/>
    <property type="gene ID" value="WBGene00023536"/>
</dbReference>
<dbReference type="KEGG" id="cbr:CBG_00021"/>
<dbReference type="CTD" id="8584638"/>
<dbReference type="WormBase" id="CBG00021">
    <property type="protein sequence ID" value="CBP13719"/>
    <property type="gene ID" value="WBGene00023536"/>
    <property type="gene designation" value="Cbr-egl-45"/>
</dbReference>
<dbReference type="eggNOG" id="KOG2072">
    <property type="taxonomic scope" value="Eukaryota"/>
</dbReference>
<dbReference type="HOGENOM" id="CLU_002096_2_2_1"/>
<dbReference type="InParanoid" id="A8WM57"/>
<dbReference type="OMA" id="DHMKNVV"/>
<dbReference type="OrthoDB" id="18884at2759"/>
<dbReference type="Proteomes" id="UP000008549">
    <property type="component" value="Unassembled WGS sequence"/>
</dbReference>
<dbReference type="GO" id="GO:0016282">
    <property type="term" value="C:eukaryotic 43S preinitiation complex"/>
    <property type="evidence" value="ECO:0007669"/>
    <property type="project" value="UniProtKB-UniRule"/>
</dbReference>
<dbReference type="GO" id="GO:0033290">
    <property type="term" value="C:eukaryotic 48S preinitiation complex"/>
    <property type="evidence" value="ECO:0007669"/>
    <property type="project" value="UniProtKB-UniRule"/>
</dbReference>
<dbReference type="GO" id="GO:0071540">
    <property type="term" value="C:eukaryotic translation initiation factor 3 complex, eIF3e"/>
    <property type="evidence" value="ECO:0000318"/>
    <property type="project" value="GO_Central"/>
</dbReference>
<dbReference type="GO" id="GO:0071541">
    <property type="term" value="C:eukaryotic translation initiation factor 3 complex, eIF3m"/>
    <property type="evidence" value="ECO:0000318"/>
    <property type="project" value="GO_Central"/>
</dbReference>
<dbReference type="GO" id="GO:0043614">
    <property type="term" value="C:multi-eIF complex"/>
    <property type="evidence" value="ECO:0000318"/>
    <property type="project" value="GO_Central"/>
</dbReference>
<dbReference type="GO" id="GO:0003729">
    <property type="term" value="F:mRNA binding"/>
    <property type="evidence" value="ECO:0000318"/>
    <property type="project" value="GO_Central"/>
</dbReference>
<dbReference type="GO" id="GO:0003743">
    <property type="term" value="F:translation initiation factor activity"/>
    <property type="evidence" value="ECO:0007669"/>
    <property type="project" value="UniProtKB-UniRule"/>
</dbReference>
<dbReference type="GO" id="GO:0018991">
    <property type="term" value="P:egg-laying behavior"/>
    <property type="evidence" value="ECO:0007669"/>
    <property type="project" value="EnsemblMetazoa"/>
</dbReference>
<dbReference type="GO" id="GO:0009792">
    <property type="term" value="P:embryo development ending in birth or egg hatching"/>
    <property type="evidence" value="ECO:0007669"/>
    <property type="project" value="EnsemblMetazoa"/>
</dbReference>
<dbReference type="GO" id="GO:0001732">
    <property type="term" value="P:formation of cytoplasmic translation initiation complex"/>
    <property type="evidence" value="ECO:0000318"/>
    <property type="project" value="GO_Central"/>
</dbReference>
<dbReference type="GO" id="GO:0002188">
    <property type="term" value="P:translation reinitiation"/>
    <property type="evidence" value="ECO:0000318"/>
    <property type="project" value="GO_Central"/>
</dbReference>
<dbReference type="FunFam" id="1.25.40.860:FF:000012">
    <property type="entry name" value="Eukaryotic translation initiation factor 3 subunit A"/>
    <property type="match status" value="1"/>
</dbReference>
<dbReference type="FunFam" id="4.10.860.10:FF:000001">
    <property type="entry name" value="Eukaryotic translation initiation factor 3 subunit A"/>
    <property type="match status" value="1"/>
</dbReference>
<dbReference type="Gene3D" id="1.25.40.860">
    <property type="match status" value="2"/>
</dbReference>
<dbReference type="Gene3D" id="4.10.860.10">
    <property type="entry name" value="UVR domain"/>
    <property type="match status" value="1"/>
</dbReference>
<dbReference type="HAMAP" id="MF_03000">
    <property type="entry name" value="eIF3a"/>
    <property type="match status" value="1"/>
</dbReference>
<dbReference type="InterPro" id="IPR027512">
    <property type="entry name" value="EIF3A"/>
</dbReference>
<dbReference type="InterPro" id="IPR054711">
    <property type="entry name" value="eIF3a_PCI_TPR-like"/>
</dbReference>
<dbReference type="InterPro" id="IPR000717">
    <property type="entry name" value="PCI_dom"/>
</dbReference>
<dbReference type="PANTHER" id="PTHR14005:SF0">
    <property type="entry name" value="EUKARYOTIC TRANSLATION INITIATION FACTOR 3 SUBUNIT A"/>
    <property type="match status" value="1"/>
</dbReference>
<dbReference type="PANTHER" id="PTHR14005">
    <property type="entry name" value="EUKARYOTIC TRANSLATION INITIATION FACTOR 3, THETA SUBUNIT"/>
    <property type="match status" value="1"/>
</dbReference>
<dbReference type="Pfam" id="PF22591">
    <property type="entry name" value="eIF3a_PCI_TPR-like"/>
    <property type="match status" value="1"/>
</dbReference>
<dbReference type="SMART" id="SM00088">
    <property type="entry name" value="PINT"/>
    <property type="match status" value="1"/>
</dbReference>
<dbReference type="PROSITE" id="PS50250">
    <property type="entry name" value="PCI"/>
    <property type="match status" value="1"/>
</dbReference>
<accession>A8WM57</accession>
<gene>
    <name evidence="1" type="primary">egl-45</name>
    <name evidence="1" type="synonym">eif-3.A</name>
    <name type="ORF">CBG00021</name>
</gene>
<organism>
    <name type="scientific">Caenorhabditis briggsae</name>
    <dbReference type="NCBI Taxonomy" id="6238"/>
    <lineage>
        <taxon>Eukaryota</taxon>
        <taxon>Metazoa</taxon>
        <taxon>Ecdysozoa</taxon>
        <taxon>Nematoda</taxon>
        <taxon>Chromadorea</taxon>
        <taxon>Rhabditida</taxon>
        <taxon>Rhabditina</taxon>
        <taxon>Rhabditomorpha</taxon>
        <taxon>Rhabditoidea</taxon>
        <taxon>Rhabditidae</taxon>
        <taxon>Peloderinae</taxon>
        <taxon>Caenorhabditis</taxon>
    </lineage>
</organism>
<feature type="chain" id="PRO_0000366348" description="Eukaryotic translation initiation factor 3 subunit A">
    <location>
        <begin position="1"/>
        <end position="1098"/>
    </location>
</feature>
<feature type="domain" description="PCI" evidence="2">
    <location>
        <begin position="324"/>
        <end position="503"/>
    </location>
</feature>
<feature type="region of interest" description="Disordered" evidence="3">
    <location>
        <begin position="599"/>
        <end position="648"/>
    </location>
</feature>
<feature type="region of interest" description="Disordered" evidence="3">
    <location>
        <begin position="805"/>
        <end position="1098"/>
    </location>
</feature>
<feature type="coiled-coil region" evidence="1">
    <location>
        <begin position="574"/>
        <end position="844"/>
    </location>
</feature>
<feature type="compositionally biased region" description="Basic and acidic residues" evidence="3">
    <location>
        <begin position="608"/>
        <end position="648"/>
    </location>
</feature>
<feature type="compositionally biased region" description="Basic and acidic residues" evidence="3">
    <location>
        <begin position="805"/>
        <end position="857"/>
    </location>
</feature>
<feature type="compositionally biased region" description="Basic and acidic residues" evidence="3">
    <location>
        <begin position="877"/>
        <end position="895"/>
    </location>
</feature>
<feature type="compositionally biased region" description="Polar residues" evidence="3">
    <location>
        <begin position="905"/>
        <end position="914"/>
    </location>
</feature>
<feature type="compositionally biased region" description="Basic and acidic residues" evidence="3">
    <location>
        <begin position="916"/>
        <end position="978"/>
    </location>
</feature>
<feature type="compositionally biased region" description="Basic and acidic residues" evidence="3">
    <location>
        <begin position="1054"/>
        <end position="1079"/>
    </location>
</feature>
<feature type="compositionally biased region" description="Low complexity" evidence="3">
    <location>
        <begin position="1080"/>
        <end position="1098"/>
    </location>
</feature>
<reference key="1">
    <citation type="journal article" date="2003" name="PLoS Biol.">
        <title>The genome sequence of Caenorhabditis briggsae: a platform for comparative genomics.</title>
        <authorList>
            <person name="Stein L.D."/>
            <person name="Bao Z."/>
            <person name="Blasiar D."/>
            <person name="Blumenthal T."/>
            <person name="Brent M.R."/>
            <person name="Chen N."/>
            <person name="Chinwalla A."/>
            <person name="Clarke L."/>
            <person name="Clee C."/>
            <person name="Coghlan A."/>
            <person name="Coulson A."/>
            <person name="D'Eustachio P."/>
            <person name="Fitch D.H.A."/>
            <person name="Fulton L.A."/>
            <person name="Fulton R.E."/>
            <person name="Griffiths-Jones S."/>
            <person name="Harris T.W."/>
            <person name="Hillier L.W."/>
            <person name="Kamath R."/>
            <person name="Kuwabara P.E."/>
            <person name="Mardis E.R."/>
            <person name="Marra M.A."/>
            <person name="Miner T.L."/>
            <person name="Minx P."/>
            <person name="Mullikin J.C."/>
            <person name="Plumb R.W."/>
            <person name="Rogers J."/>
            <person name="Schein J.E."/>
            <person name="Sohrmann M."/>
            <person name="Spieth J."/>
            <person name="Stajich J.E."/>
            <person name="Wei C."/>
            <person name="Willey D."/>
            <person name="Wilson R.K."/>
            <person name="Durbin R.M."/>
            <person name="Waterston R.H."/>
        </authorList>
    </citation>
    <scope>NUCLEOTIDE SEQUENCE [LARGE SCALE GENOMIC DNA]</scope>
    <source>
        <strain>AF16</strain>
    </source>
</reference>
<proteinExistence type="inferred from homology"/>
<name>EIF3A_CAEBR</name>
<evidence type="ECO:0000255" key="1">
    <source>
        <dbReference type="HAMAP-Rule" id="MF_03000"/>
    </source>
</evidence>
<evidence type="ECO:0000255" key="2">
    <source>
        <dbReference type="PROSITE-ProRule" id="PRU01185"/>
    </source>
</evidence>
<evidence type="ECO:0000256" key="3">
    <source>
        <dbReference type="SAM" id="MobiDB-lite"/>
    </source>
</evidence>
<keyword id="KW-0175">Coiled coil</keyword>
<keyword id="KW-0963">Cytoplasm</keyword>
<keyword id="KW-0396">Initiation factor</keyword>
<keyword id="KW-0648">Protein biosynthesis</keyword>
<keyword id="KW-1185">Reference proteome</keyword>
<keyword id="KW-0694">RNA-binding</keyword>
<sequence length="1098" mass="127717">MAPNYFQKPEAALKRAEELIQVGKESDALDTLHDTIKARRHKQWTTVHEQIMIKHMELCVDLKKQHLAKDALFQYKALTQQINVKSLETVVEHFLKLAEQRTEDAQKQSIEKVEEIGDLDQGDVPERLLLAVVSGAAAQDRMDRTVLAPWLRFLWDSYRNCLELLRNNAQVEQLYHTISRHSFSFCLRYQRRTEFRKLCDLLRMHLNQIQKHQYAPNVNSFRVKLTSPESLTLMQDTRLVQLDTAIQMELWQEAYKSAEDVHGMMQLSKDKDKRTVKPSSYVNYYDKLALVFWKAGNRLFHAAALLQKFIIYKDMKKSFTQEEAQEQATRVLLATLSIPEGSDLPSDLSRNLDIEEQHVANMRLLSNLLRLPIAPTKVGILKEAARIGVPEAAGQVAKDLFKLLESNFSPLRVAKDVQSVLDTITRPDHLQYVESLQAVAAVKALKQVSVIYEAISWERIRKIIPFYHDLALERLVVEASKHRIVKAQLDHRADCVRFGSSDATLAGGVDEYDNNEGFTGDDTQLGVEGVRNHLEAMYTRLRVLVEGLDSEKRRKEIVKKIENHVTSYEKNRVTEIERIHRRKKMLENYKENWERVKAEKAATAATEQAKREEAARAEEMKRLDEQNKESERKRKQAEQEEIQKKIKRDQLHKMQQNVIYQAIIKEKGLEQFRDMDPEQVLREQRERLDKERAETQRRLQQQEKKFDHHIRALHLEEMNERRAVMHMRLNEAPRLHEEYENKRIEKEIAAHENHVKLWSMWDQVREATLDWVETVKVENQENLEKKISDWEVKLEAVRNSRLAERAEKRKKERKEAAMQAKIAEERKRREEEERARQAVIDSQRRPHGERGQRREMENSAAMQDSDWRRNAPPRDSMPQREPRPMRDGPPREPFREMPSSKADTDSSWRSSAQPTRKPDDRRSDDFRRDDGPRRSDDHRRNDEFRRSDDFRRNDDFRRDGPPRPMSKADTDQKWERGAVTKTVVSPPKTENQPAPAAEAPKADGPRRFIPPALRNKPAGGGDEQPAPQRGANVTSPPDRAPGLRGPPGPGGRDLPPRDLPPRDGPRDIPRRDGPRRDGPNRNSGANNAGNADSANWRR</sequence>